<name>MRE11_AERPE</name>
<proteinExistence type="inferred from homology"/>
<evidence type="ECO:0000255" key="1">
    <source>
        <dbReference type="HAMAP-Rule" id="MF_02044"/>
    </source>
</evidence>
<sequence length="409" mass="45018">MPKVLHVADVHLGARPYGLEERRDDIFRSFEFVVETALKDRPDAVLIAGDLFDKPKLPLRDVKQAVELVRALTDAGIPVLAAHGEHDTPSVRDETLLSLMEASLDGFKAPLYRSGMRPGDFVVDLGSLKVAVVPFFKVPLEERRRLTLRFLREFDQISRTSSGTLVLLAHMSLDAEMQFDAVASPSDLPSGAKYAALGHLHAPRIRLDAPTPYAYPGVLDPLKVEEINTPGSPLYVDLSGDAPIIEKVKVPRRPQYRIEVDIGDGGSIYNAVNRGLRRVLANVRASREDWLKPLIHVIIKSDKPISKARVIAEARKAAGGADVLLKIHWKIVAGGEHAGTSPGLQGEGPLDLAKIAAEYYKIPLNAASTILHDLAEAAAEKDELRVREILETLATTVSQDTWKRILYMR</sequence>
<reference key="1">
    <citation type="journal article" date="1999" name="DNA Res.">
        <title>Complete genome sequence of an aerobic hyper-thermophilic crenarchaeon, Aeropyrum pernix K1.</title>
        <authorList>
            <person name="Kawarabayasi Y."/>
            <person name="Hino Y."/>
            <person name="Horikawa H."/>
            <person name="Yamazaki S."/>
            <person name="Haikawa Y."/>
            <person name="Jin-no K."/>
            <person name="Takahashi M."/>
            <person name="Sekine M."/>
            <person name="Baba S."/>
            <person name="Ankai A."/>
            <person name="Kosugi H."/>
            <person name="Hosoyama A."/>
            <person name="Fukui S."/>
            <person name="Nagai Y."/>
            <person name="Nishijima K."/>
            <person name="Nakazawa H."/>
            <person name="Takamiya M."/>
            <person name="Masuda S."/>
            <person name="Funahashi T."/>
            <person name="Tanaka T."/>
            <person name="Kudoh Y."/>
            <person name="Yamazaki J."/>
            <person name="Kushida N."/>
            <person name="Oguchi A."/>
            <person name="Aoki K."/>
            <person name="Kubota K."/>
            <person name="Nakamura Y."/>
            <person name="Nomura N."/>
            <person name="Sako Y."/>
            <person name="Kikuchi H."/>
        </authorList>
    </citation>
    <scope>NUCLEOTIDE SEQUENCE [LARGE SCALE GENOMIC DNA]</scope>
    <source>
        <strain>ATCC 700893 / DSM 11879 / JCM 9820 / NBRC 100138 / K1</strain>
    </source>
</reference>
<comment type="function">
    <text evidence="1">Part of the Rad50/Mre11 complex, which is involved in the early steps of DNA double-strand break (DSB) repair. The complex may facilitate opening of the processed DNA ends to aid in the recruitment of HerA and NurA. Mre11 binds to DSB ends and has both double-stranded 3'-5' exonuclease activity and single-stranded endonuclease activity.</text>
</comment>
<comment type="cofactor">
    <cofactor evidence="1">
        <name>Mn(2+)</name>
        <dbReference type="ChEBI" id="CHEBI:29035"/>
    </cofactor>
    <text evidence="1">Binds 2 manganese ions per subunit.</text>
</comment>
<comment type="activity regulation">
    <text evidence="1">Nuclease activity is regulated by Rad50.</text>
</comment>
<comment type="subunit">
    <text evidence="1">Homodimer. Forms a heterotetramer composed of two Mre11 subunits and two Rad50 subunits.</text>
</comment>
<comment type="similarity">
    <text evidence="1">Belongs to the MRE11/RAD32 family.</text>
</comment>
<dbReference type="EC" id="3.1.-.-" evidence="1"/>
<dbReference type="EMBL" id="BA000002">
    <property type="protein sequence ID" value="BAA79023.1"/>
    <property type="molecule type" value="Genomic_DNA"/>
</dbReference>
<dbReference type="PIR" id="E72765">
    <property type="entry name" value="E72765"/>
</dbReference>
<dbReference type="RefSeq" id="WP_010865497.1">
    <property type="nucleotide sequence ID" value="NC_000854.2"/>
</dbReference>
<dbReference type="SMR" id="Q9YFY8"/>
<dbReference type="STRING" id="272557.APE_0113"/>
<dbReference type="EnsemblBacteria" id="BAA79023">
    <property type="protein sequence ID" value="BAA79023"/>
    <property type="gene ID" value="APE_0113"/>
</dbReference>
<dbReference type="GeneID" id="1445655"/>
<dbReference type="KEGG" id="ape:APE_0113"/>
<dbReference type="eggNOG" id="arCOG00397">
    <property type="taxonomic scope" value="Archaea"/>
</dbReference>
<dbReference type="Proteomes" id="UP000002518">
    <property type="component" value="Chromosome"/>
</dbReference>
<dbReference type="GO" id="GO:0008408">
    <property type="term" value="F:3'-5' exonuclease activity"/>
    <property type="evidence" value="ECO:0007669"/>
    <property type="project" value="UniProtKB-UniRule"/>
</dbReference>
<dbReference type="GO" id="GO:0045027">
    <property type="term" value="F:DNA end binding"/>
    <property type="evidence" value="ECO:0007669"/>
    <property type="project" value="UniProtKB-UniRule"/>
</dbReference>
<dbReference type="GO" id="GO:0004519">
    <property type="term" value="F:endonuclease activity"/>
    <property type="evidence" value="ECO:0007669"/>
    <property type="project" value="UniProtKB-UniRule"/>
</dbReference>
<dbReference type="GO" id="GO:0030145">
    <property type="term" value="F:manganese ion binding"/>
    <property type="evidence" value="ECO:0007669"/>
    <property type="project" value="UniProtKB-UniRule"/>
</dbReference>
<dbReference type="GO" id="GO:0000403">
    <property type="term" value="F:Y-form DNA binding"/>
    <property type="evidence" value="ECO:0007669"/>
    <property type="project" value="UniProtKB-UniRule"/>
</dbReference>
<dbReference type="GO" id="GO:0006302">
    <property type="term" value="P:double-strand break repair"/>
    <property type="evidence" value="ECO:0007669"/>
    <property type="project" value="UniProtKB-UniRule"/>
</dbReference>
<dbReference type="CDD" id="cd00840">
    <property type="entry name" value="MPP_Mre11_N"/>
    <property type="match status" value="1"/>
</dbReference>
<dbReference type="Gene3D" id="3.60.21.10">
    <property type="match status" value="1"/>
</dbReference>
<dbReference type="HAMAP" id="MF_02044">
    <property type="entry name" value="Mre11"/>
    <property type="match status" value="1"/>
</dbReference>
<dbReference type="InterPro" id="IPR004843">
    <property type="entry name" value="Calcineurin-like_PHP_ApaH"/>
</dbReference>
<dbReference type="InterPro" id="IPR050535">
    <property type="entry name" value="DNA_Repair-Maintenance_Comp"/>
</dbReference>
<dbReference type="InterPro" id="IPR029052">
    <property type="entry name" value="Metallo-depent_PP-like"/>
</dbReference>
<dbReference type="InterPro" id="IPR032885">
    <property type="entry name" value="Mre11_archaea-type"/>
</dbReference>
<dbReference type="InterPro" id="IPR041796">
    <property type="entry name" value="Mre11_N"/>
</dbReference>
<dbReference type="PANTHER" id="PTHR30337">
    <property type="entry name" value="COMPONENT OF ATP-DEPENDENT DSDNA EXONUCLEASE"/>
    <property type="match status" value="1"/>
</dbReference>
<dbReference type="PANTHER" id="PTHR30337:SF0">
    <property type="entry name" value="NUCLEASE SBCCD SUBUNIT D"/>
    <property type="match status" value="1"/>
</dbReference>
<dbReference type="Pfam" id="PF00149">
    <property type="entry name" value="Metallophos"/>
    <property type="match status" value="1"/>
</dbReference>
<dbReference type="SUPFAM" id="SSF56300">
    <property type="entry name" value="Metallo-dependent phosphatases"/>
    <property type="match status" value="1"/>
</dbReference>
<accession>Q9YFY8</accession>
<keyword id="KW-0227">DNA damage</keyword>
<keyword id="KW-0234">DNA repair</keyword>
<keyword id="KW-0255">Endonuclease</keyword>
<keyword id="KW-0269">Exonuclease</keyword>
<keyword id="KW-0378">Hydrolase</keyword>
<keyword id="KW-0464">Manganese</keyword>
<keyword id="KW-0479">Metal-binding</keyword>
<keyword id="KW-0540">Nuclease</keyword>
<keyword id="KW-1185">Reference proteome</keyword>
<feature type="chain" id="PRO_0000138684" description="DNA double-strand break repair protein Mre11">
    <location>
        <begin position="1"/>
        <end position="409"/>
    </location>
</feature>
<feature type="active site" description="Proton donor" evidence="1">
    <location>
        <position position="86"/>
    </location>
</feature>
<feature type="binding site" evidence="1">
    <location>
        <position position="9"/>
    </location>
    <ligand>
        <name>Mn(2+)</name>
        <dbReference type="ChEBI" id="CHEBI:29035"/>
        <label>1</label>
    </ligand>
</feature>
<feature type="binding site" evidence="1">
    <location>
        <position position="11"/>
    </location>
    <ligand>
        <name>Mn(2+)</name>
        <dbReference type="ChEBI" id="CHEBI:29035"/>
        <label>1</label>
    </ligand>
</feature>
<feature type="binding site" evidence="1">
    <location>
        <position position="50"/>
    </location>
    <ligand>
        <name>Mn(2+)</name>
        <dbReference type="ChEBI" id="CHEBI:29035"/>
        <label>1</label>
    </ligand>
</feature>
<feature type="binding site" evidence="1">
    <location>
        <position position="50"/>
    </location>
    <ligand>
        <name>Mn(2+)</name>
        <dbReference type="ChEBI" id="CHEBI:29035"/>
        <label>2</label>
    </ligand>
</feature>
<feature type="binding site" evidence="1">
    <location>
        <position position="85"/>
    </location>
    <ligand>
        <name>Mn(2+)</name>
        <dbReference type="ChEBI" id="CHEBI:29035"/>
        <label>2</label>
    </ligand>
</feature>
<feature type="binding site" evidence="1">
    <location>
        <position position="170"/>
    </location>
    <ligand>
        <name>Mn(2+)</name>
        <dbReference type="ChEBI" id="CHEBI:29035"/>
        <label>2</label>
    </ligand>
</feature>
<feature type="binding site" evidence="1">
    <location>
        <position position="199"/>
    </location>
    <ligand>
        <name>Mn(2+)</name>
        <dbReference type="ChEBI" id="CHEBI:29035"/>
        <label>2</label>
    </ligand>
</feature>
<feature type="binding site" evidence="1">
    <location>
        <position position="201"/>
    </location>
    <ligand>
        <name>Mn(2+)</name>
        <dbReference type="ChEBI" id="CHEBI:29035"/>
        <label>1</label>
    </ligand>
</feature>
<organism>
    <name type="scientific">Aeropyrum pernix (strain ATCC 700893 / DSM 11879 / JCM 9820 / NBRC 100138 / K1)</name>
    <dbReference type="NCBI Taxonomy" id="272557"/>
    <lineage>
        <taxon>Archaea</taxon>
        <taxon>Thermoproteota</taxon>
        <taxon>Thermoprotei</taxon>
        <taxon>Desulfurococcales</taxon>
        <taxon>Desulfurococcaceae</taxon>
        <taxon>Aeropyrum</taxon>
    </lineage>
</organism>
<protein>
    <recommendedName>
        <fullName evidence="1">DNA double-strand break repair protein Mre11</fullName>
        <ecNumber evidence="1">3.1.-.-</ecNumber>
    </recommendedName>
</protein>
<gene>
    <name evidence="1" type="primary">mre11</name>
    <name type="ordered locus">APE_0113</name>
</gene>